<proteinExistence type="evidence at protein level"/>
<name>CMR1A_PYRFU</name>
<reference key="1">
    <citation type="journal article" date="1999" name="Genetics">
        <title>Divergence of the hyperthermophilic archaea Pyrococcus furiosus and P. horikoshii inferred from complete genomic sequences.</title>
        <authorList>
            <person name="Maeder D.L."/>
            <person name="Weiss R.B."/>
            <person name="Dunn D.M."/>
            <person name="Cherry J.L."/>
            <person name="Gonzalez J.M."/>
            <person name="DiRuggiero J."/>
            <person name="Robb F.T."/>
        </authorList>
    </citation>
    <scope>NUCLEOTIDE SEQUENCE [LARGE SCALE GENOMIC DNA]</scope>
    <source>
        <strain>ATCC 43587 / DSM 3638 / JCM 8422 / Vc1</strain>
    </source>
</reference>
<reference key="2">
    <citation type="journal article" date="2009" name="Cell">
        <title>RNA-guided RNA cleavage by a CRISPR RNA-Cas protein complex.</title>
        <authorList>
            <person name="Hale C.R."/>
            <person name="Zhao P."/>
            <person name="Olson S."/>
            <person name="Duff M.O."/>
            <person name="Graveley B.R."/>
            <person name="Wells L."/>
            <person name="Terns R.M."/>
            <person name="Terns M.P."/>
        </authorList>
    </citation>
    <scope>IDENTIFICATION BY MASS SPECTROMETRY</scope>
    <scope>FUNCTION IN CMR COMPLEX</scope>
    <scope>SUBCELLULAR LOCATION</scope>
    <scope>SUBUNIT</scope>
    <source>
        <strain>ATCC 43587 / DSM 3638 / JCM 8422 / Vc1</strain>
    </source>
</reference>
<reference key="3">
    <citation type="journal article" date="2013" name="Mol. Cell">
        <title>Structure of an RNA silencing complex of the CRISPR-Cas immune system.</title>
        <authorList>
            <person name="Spilman M."/>
            <person name="Cocozaki A."/>
            <person name="Hale C."/>
            <person name="Shao Y."/>
            <person name="Ramia N."/>
            <person name="Terns R."/>
            <person name="Terns M."/>
            <person name="Li H."/>
            <person name="Stagg S."/>
        </authorList>
    </citation>
    <scope>STRUCTURE BY ELECTRON MICROSCOPY (12.0 ANGSTROMS) OF WHOLE CMR COMPLEX WITH TARGET RNA</scope>
    <scope>SUBUNIT</scope>
    <scope>RNA-BINDING</scope>
    <source>
        <strain>ATCC 43587 / DSM 3638 / JCM 8422 / Vc1</strain>
    </source>
</reference>
<reference key="4">
    <citation type="journal article" date="2014" name="Mol. Cell">
        <title>Structural model of a CRISPR RNA-silencing complex reveals the RNA-target cleavage activity in Cmr4.</title>
        <authorList>
            <person name="Benda C."/>
            <person name="Ebert J."/>
            <person name="Scheltema R.A."/>
            <person name="Schiller H.B."/>
            <person name="Baumgaertner M."/>
            <person name="Bonneau F."/>
            <person name="Mann M."/>
            <person name="Conti E."/>
        </authorList>
    </citation>
    <scope>X-RAY CRYSTALLOGRAPHY (2.7 ANGSTROMS)</scope>
    <scope>FUNCTION</scope>
    <scope>SUBUNIT</scope>
    <source>
        <strain>ATCC 43587 / DSM 3638 / JCM 8422 / Vc1</strain>
    </source>
</reference>
<protein>
    <recommendedName>
        <fullName>CRISPR system Cmr subunit Cmr1-1</fullName>
    </recommendedName>
    <alternativeName>
        <fullName>CRISPR type III-B/RAMP module RAMP protein Cmr1-1</fullName>
    </alternativeName>
</protein>
<feature type="chain" id="PRO_0000418070" description="CRISPR system Cmr subunit Cmr1-1">
    <location>
        <begin position="1"/>
        <end position="338"/>
    </location>
</feature>
<feature type="strand" evidence="7">
    <location>
        <begin position="2"/>
        <end position="12"/>
    </location>
</feature>
<feature type="helix" evidence="7">
    <location>
        <begin position="18"/>
        <end position="22"/>
    </location>
</feature>
<feature type="helix" evidence="7">
    <location>
        <begin position="32"/>
        <end position="48"/>
    </location>
</feature>
<feature type="helix" evidence="7">
    <location>
        <begin position="52"/>
        <end position="63"/>
    </location>
</feature>
<feature type="strand" evidence="6">
    <location>
        <begin position="66"/>
        <end position="68"/>
    </location>
</feature>
<feature type="strand" evidence="7">
    <location>
        <begin position="71"/>
        <end position="78"/>
    </location>
</feature>
<feature type="helix" evidence="7">
    <location>
        <begin position="89"/>
        <end position="92"/>
    </location>
</feature>
<feature type="turn" evidence="7">
    <location>
        <begin position="96"/>
        <end position="99"/>
    </location>
</feature>
<feature type="helix" evidence="7">
    <location>
        <begin position="100"/>
        <end position="107"/>
    </location>
</feature>
<feature type="strand" evidence="7">
    <location>
        <begin position="113"/>
        <end position="115"/>
    </location>
</feature>
<feature type="strand" evidence="7">
    <location>
        <begin position="120"/>
        <end position="128"/>
    </location>
</feature>
<feature type="helix" evidence="7">
    <location>
        <begin position="130"/>
        <end position="146"/>
    </location>
</feature>
<feature type="turn" evidence="7">
    <location>
        <begin position="151"/>
        <end position="154"/>
    </location>
</feature>
<feature type="turn" evidence="6">
    <location>
        <begin position="156"/>
        <end position="158"/>
    </location>
</feature>
<feature type="strand" evidence="7">
    <location>
        <begin position="160"/>
        <end position="166"/>
    </location>
</feature>
<feature type="helix" evidence="7">
    <location>
        <begin position="168"/>
        <end position="172"/>
    </location>
</feature>
<feature type="strand" evidence="7">
    <location>
        <begin position="177"/>
        <end position="181"/>
    </location>
</feature>
<feature type="helix" evidence="7">
    <location>
        <begin position="182"/>
        <end position="200"/>
    </location>
</feature>
<feature type="strand" evidence="7">
    <location>
        <begin position="220"/>
        <end position="225"/>
    </location>
</feature>
<feature type="helix" evidence="7">
    <location>
        <begin position="231"/>
        <end position="258"/>
    </location>
</feature>
<feature type="strand" evidence="7">
    <location>
        <begin position="277"/>
        <end position="285"/>
    </location>
</feature>
<feature type="strand" evidence="7">
    <location>
        <begin position="288"/>
        <end position="296"/>
    </location>
</feature>
<feature type="helix" evidence="7">
    <location>
        <begin position="310"/>
        <end position="312"/>
    </location>
</feature>
<feature type="helix" evidence="7">
    <location>
        <begin position="317"/>
        <end position="320"/>
    </location>
</feature>
<feature type="helix" evidence="7">
    <location>
        <begin position="321"/>
        <end position="324"/>
    </location>
</feature>
<feature type="strand" evidence="7">
    <location>
        <begin position="329"/>
        <end position="334"/>
    </location>
</feature>
<dbReference type="EMBL" id="AE009950">
    <property type="protein sequence ID" value="AAL81254.1"/>
    <property type="molecule type" value="Genomic_DNA"/>
</dbReference>
<dbReference type="RefSeq" id="WP_011012270.1">
    <property type="nucleotide sequence ID" value="NC_003413.1"/>
</dbReference>
<dbReference type="PDB" id="4W8X">
    <property type="method" value="X-ray"/>
    <property type="resolution" value="3.00 A"/>
    <property type="chains" value="A=1-338"/>
</dbReference>
<dbReference type="PDB" id="4W8Z">
    <property type="method" value="X-ray"/>
    <property type="resolution" value="2.70 A"/>
    <property type="chains" value="A=1-338"/>
</dbReference>
<dbReference type="PDBsum" id="4W8X"/>
<dbReference type="PDBsum" id="4W8Z"/>
<dbReference type="EMDB" id="EMD-5740"/>
<dbReference type="SMR" id="Q8U1S5"/>
<dbReference type="DIP" id="DIP-54364N"/>
<dbReference type="IntAct" id="Q8U1S5">
    <property type="interactions" value="6"/>
</dbReference>
<dbReference type="STRING" id="186497.PF1130"/>
<dbReference type="PaxDb" id="186497-PF1130"/>
<dbReference type="GeneID" id="1468999"/>
<dbReference type="KEGG" id="pfu:PF1130"/>
<dbReference type="PATRIC" id="fig|186497.12.peg.1191"/>
<dbReference type="eggNOG" id="arCOG03891">
    <property type="taxonomic scope" value="Archaea"/>
</dbReference>
<dbReference type="HOGENOM" id="CLU_050338_1_0_2"/>
<dbReference type="OrthoDB" id="102565at2157"/>
<dbReference type="PhylomeDB" id="Q8U1S5"/>
<dbReference type="EvolutionaryTrace" id="Q8U1S5"/>
<dbReference type="Proteomes" id="UP000001013">
    <property type="component" value="Chromosome"/>
</dbReference>
<dbReference type="GO" id="GO:0005737">
    <property type="term" value="C:cytoplasm"/>
    <property type="evidence" value="ECO:0007669"/>
    <property type="project" value="UniProtKB-SubCell"/>
</dbReference>
<dbReference type="GO" id="GO:0003723">
    <property type="term" value="F:RNA binding"/>
    <property type="evidence" value="ECO:0007669"/>
    <property type="project" value="UniProtKB-KW"/>
</dbReference>
<dbReference type="GO" id="GO:0051607">
    <property type="term" value="P:defense response to virus"/>
    <property type="evidence" value="ECO:0007669"/>
    <property type="project" value="UniProtKB-KW"/>
</dbReference>
<dbReference type="CDD" id="cd09657">
    <property type="entry name" value="Cmr1_III-B"/>
    <property type="match status" value="1"/>
</dbReference>
<dbReference type="InterPro" id="IPR049498">
    <property type="entry name" value="Cmr1-like_C"/>
</dbReference>
<dbReference type="InterPro" id="IPR007522">
    <property type="entry name" value="CRISPR-assoc_prot_TM1795"/>
</dbReference>
<dbReference type="InterPro" id="IPR005537">
    <property type="entry name" value="RAMP_III_fam"/>
</dbReference>
<dbReference type="NCBIfam" id="TIGR01894">
    <property type="entry name" value="cas_TM1795_cmr1"/>
    <property type="match status" value="1"/>
</dbReference>
<dbReference type="Pfam" id="PF21452">
    <property type="entry name" value="Cmr1_like_C"/>
    <property type="match status" value="1"/>
</dbReference>
<dbReference type="Pfam" id="PF03787">
    <property type="entry name" value="RAMPs"/>
    <property type="match status" value="1"/>
</dbReference>
<sequence length="338" mass="38895">MFIEEFEIESITSTHLLEVLTREYPEVRSPSIKGAMRWWFRALAGSYFGDDAQKLKEIENQVFGSTKERSRVKISVTPLSSPKRLNLKEFKDKNVGYIWFSINLLGKRGTITHYYPPGSRFRVVLESPSERVIKLATLSLWALVSLGSVGFRSRRGTGSMKIVRASSEVLEDLGLTTEFNSIDEFKDSLKRVLDVTGEILGVKNSETNKSLPSYATLKFSDVEVFGPGKNTWEVLAQFNNSYKEYLRRRIKKYQRIIFGLPRFKLRGVRKDLRRASPLWFGVVEIGGKPYGRIIKFFQSTFHPEVRSKHIVDWNVLSNFDWFISSRLPVTKVWGGWSG</sequence>
<gene>
    <name evidence="4" type="primary">cmr1-1</name>
    <name type="ordered locus">PF1130</name>
</gene>
<keyword id="KW-0002">3D-structure</keyword>
<keyword id="KW-0051">Antiviral defense</keyword>
<keyword id="KW-0963">Cytoplasm</keyword>
<keyword id="KW-1185">Reference proteome</keyword>
<keyword id="KW-0694">RNA-binding</keyword>
<evidence type="ECO:0000269" key="1">
    <source>
    </source>
</evidence>
<evidence type="ECO:0000269" key="2">
    <source>
    </source>
</evidence>
<evidence type="ECO:0000269" key="3">
    <source>
    </source>
</evidence>
<evidence type="ECO:0000303" key="4">
    <source>
    </source>
</evidence>
<evidence type="ECO:0000305" key="5"/>
<evidence type="ECO:0007829" key="6">
    <source>
        <dbReference type="PDB" id="4W8X"/>
    </source>
</evidence>
<evidence type="ECO:0007829" key="7">
    <source>
        <dbReference type="PDB" id="4W8Z"/>
    </source>
</evidence>
<organism>
    <name type="scientific">Pyrococcus furiosus (strain ATCC 43587 / DSM 3638 / JCM 8422 / Vc1)</name>
    <dbReference type="NCBI Taxonomy" id="186497"/>
    <lineage>
        <taxon>Archaea</taxon>
        <taxon>Methanobacteriati</taxon>
        <taxon>Methanobacteriota</taxon>
        <taxon>Thermococci</taxon>
        <taxon>Thermococcales</taxon>
        <taxon>Thermococcaceae</taxon>
        <taxon>Pyrococcus</taxon>
    </lineage>
</organism>
<comment type="function">
    <text evidence="1 3">CRISPR (clustered regularly interspaced short palindromic repeat), is an adaptive immune system that provides protection against mobile genetic elements (viruses, transposable elements and conjugative plasmids). CRISPR clusters contain sequences complementary to antecedent mobile elements and target invading nucleic acids. CRISPR clusters are transcribed and processed into CRISPR RNA (crRNA), formerly called psiRNA (prokaryotic silencing) in this organism. Part of the Cmr ribonucleoprotein complex which has divalent cation-dependent endoribonuclease activity specific for ssRNA complementary to the crRNA (target RNA), generating 5' hydroxy- and 3' phosphate or 2'-3' cyclic phosphate termini. Cmr4 is probably the subunit that cleaves target RNA (PubMed:25280103). Cmr complex does not cleave ssDNA complementary to the crRNA. Cleavage of invading RNA is guided by the crRNA; substrate cleavage occurs a fixed distance (14 nt) from the 3' end of the crRNA. In vitro reconstitution shows Cmr1-2 and Cmr5 are not absolutely necessary for target cleavage (PubMed:19945378).</text>
</comment>
<comment type="subunit">
    <text evidence="1 2 3">Part of the type III-B Cmr ribonucleoprotein (RNP) complex, an elongated RNP with Cmr2 and Cmr3 as the base, with Cmr4 and Cmr5 forming a helical core along the mature crRNA (39 or 45 nt in length), while the complex is capped by Cmr6 and Cmr1. The 5' end of the crRNA is bound to Cmr2 and Cmr3, while Cmr6 and a Cmr1 subunit (Cmr1-1 or Cmr1-2) cap the 3' end of the crRNA. The target RNA lies antiparallel to the crRNA, with its 5' end near Cmr1 and Cmr6 and its 3' end near Cmr2 and Cmr3; major target cleavage occurs nears the junction of Cmr1/Cmr6 and Cmr4/Cmr, with minor cleavage occurring at 6 nt intervals which coincide with the proposed spacing of Cmr4 subunits (PubMed:24119404, PubMed:25280103).</text>
</comment>
<comment type="subcellular location">
    <subcellularLocation>
        <location evidence="1">Cytoplasm</location>
    </subcellularLocation>
</comment>
<comment type="similarity">
    <text evidence="5">Belongs to the CRISPR system Cmr1 family.</text>
</comment>
<accession>Q8U1S5</accession>